<reference key="1">
    <citation type="journal article" date="1998" name="Science">
        <title>Genome sequence of the nematode C. elegans: a platform for investigating biology.</title>
        <authorList>
            <consortium name="The C. elegans sequencing consortium"/>
        </authorList>
    </citation>
    <scope>NUCLEOTIDE SEQUENCE [LARGE SCALE GENOMIC DNA]</scope>
    <source>
        <strain>Bristol N2</strain>
    </source>
</reference>
<proteinExistence type="predicted"/>
<gene>
    <name type="primary">pcf-11</name>
    <name type="ORF">R144.2</name>
</gene>
<accession>Q09345</accession>
<name>PCF11_CAEEL</name>
<dbReference type="EMBL" id="FO080694">
    <property type="protein sequence ID" value="CCD65870.1"/>
    <property type="molecule type" value="Genomic_DNA"/>
</dbReference>
<dbReference type="PIR" id="T16758">
    <property type="entry name" value="T16758"/>
</dbReference>
<dbReference type="RefSeq" id="NP_498068.1">
    <property type="nucleotide sequence ID" value="NM_065667.7"/>
</dbReference>
<dbReference type="SMR" id="Q09345"/>
<dbReference type="BioGRID" id="56599">
    <property type="interactions" value="20"/>
</dbReference>
<dbReference type="FunCoup" id="Q09345">
    <property type="interactions" value="1474"/>
</dbReference>
<dbReference type="IntAct" id="Q09345">
    <property type="interactions" value="12"/>
</dbReference>
<dbReference type="STRING" id="6239.R144.2a.1"/>
<dbReference type="PaxDb" id="6239-R144.2a"/>
<dbReference type="PeptideAtlas" id="Q09345"/>
<dbReference type="EnsemblMetazoa" id="R144.2a.1">
    <property type="protein sequence ID" value="R144.2a.1"/>
    <property type="gene ID" value="WBGene00020092"/>
</dbReference>
<dbReference type="EnsemblMetazoa" id="R144.2a.2">
    <property type="protein sequence ID" value="R144.2a.2"/>
    <property type="gene ID" value="WBGene00020092"/>
</dbReference>
<dbReference type="GeneID" id="246008"/>
<dbReference type="KEGG" id="cel:CELE_R144.2"/>
<dbReference type="UCSC" id="R144.2b">
    <property type="organism name" value="c. elegans"/>
</dbReference>
<dbReference type="AGR" id="WB:WBGene00020092"/>
<dbReference type="CTD" id="246008"/>
<dbReference type="WormBase" id="R144.2a">
    <property type="protein sequence ID" value="CE02032"/>
    <property type="gene ID" value="WBGene00020092"/>
    <property type="gene designation" value="pcf-11"/>
</dbReference>
<dbReference type="eggNOG" id="KOG2071">
    <property type="taxonomic scope" value="Eukaryota"/>
</dbReference>
<dbReference type="HOGENOM" id="CLU_014705_0_0_1"/>
<dbReference type="InParanoid" id="Q09345"/>
<dbReference type="OMA" id="WPATNSK"/>
<dbReference type="OrthoDB" id="343582at2759"/>
<dbReference type="PhylomeDB" id="Q09345"/>
<dbReference type="Reactome" id="R-CEL-6807505">
    <property type="pathway name" value="RNA polymerase II transcribes snRNA genes"/>
</dbReference>
<dbReference type="Reactome" id="R-CEL-72187">
    <property type="pathway name" value="mRNA 3'-end processing"/>
</dbReference>
<dbReference type="Reactome" id="R-CEL-72203">
    <property type="pathway name" value="Processing of Capped Intron-Containing Pre-mRNA"/>
</dbReference>
<dbReference type="Reactome" id="R-CEL-73856">
    <property type="pathway name" value="RNA Polymerase II Transcription Termination"/>
</dbReference>
<dbReference type="Reactome" id="R-CEL-77595">
    <property type="pathway name" value="Processing of Intronless Pre-mRNAs"/>
</dbReference>
<dbReference type="SignaLink" id="Q09345"/>
<dbReference type="PRO" id="PR:Q09345"/>
<dbReference type="Proteomes" id="UP000001940">
    <property type="component" value="Chromosome III"/>
</dbReference>
<dbReference type="Bgee" id="WBGene00020092">
    <property type="expression patterns" value="Expressed in pharyngeal muscle cell (C elegans) and 3 other cell types or tissues"/>
</dbReference>
<dbReference type="ExpressionAtlas" id="Q09345">
    <property type="expression patterns" value="baseline and differential"/>
</dbReference>
<dbReference type="GO" id="GO:0005737">
    <property type="term" value="C:cytoplasm"/>
    <property type="evidence" value="ECO:0000318"/>
    <property type="project" value="GO_Central"/>
</dbReference>
<dbReference type="GO" id="GO:0005849">
    <property type="term" value="C:mRNA cleavage factor complex"/>
    <property type="evidence" value="ECO:0000318"/>
    <property type="project" value="GO_Central"/>
</dbReference>
<dbReference type="GO" id="GO:0003729">
    <property type="term" value="F:mRNA binding"/>
    <property type="evidence" value="ECO:0000318"/>
    <property type="project" value="GO_Central"/>
</dbReference>
<dbReference type="GO" id="GO:0000993">
    <property type="term" value="F:RNA polymerase II complex binding"/>
    <property type="evidence" value="ECO:0000318"/>
    <property type="project" value="GO_Central"/>
</dbReference>
<dbReference type="GO" id="GO:0031124">
    <property type="term" value="P:mRNA 3'-end processing"/>
    <property type="evidence" value="ECO:0007669"/>
    <property type="project" value="InterPro"/>
</dbReference>
<dbReference type="GO" id="GO:0006369">
    <property type="term" value="P:termination of RNA polymerase II transcription"/>
    <property type="evidence" value="ECO:0000318"/>
    <property type="project" value="GO_Central"/>
</dbReference>
<dbReference type="CDD" id="cd16982">
    <property type="entry name" value="CID_Pcf11"/>
    <property type="match status" value="1"/>
</dbReference>
<dbReference type="FunFam" id="1.25.40.90:FF:000023">
    <property type="entry name" value="polyadenylation and cleavage factor homolog 4"/>
    <property type="match status" value="1"/>
</dbReference>
<dbReference type="Gene3D" id="1.25.40.90">
    <property type="match status" value="1"/>
</dbReference>
<dbReference type="InterPro" id="IPR006569">
    <property type="entry name" value="CID_dom"/>
</dbReference>
<dbReference type="InterPro" id="IPR008942">
    <property type="entry name" value="ENTH_VHS"/>
</dbReference>
<dbReference type="InterPro" id="IPR045154">
    <property type="entry name" value="PCF11-like"/>
</dbReference>
<dbReference type="InterPro" id="IPR047415">
    <property type="entry name" value="Pcf11_CID"/>
</dbReference>
<dbReference type="PANTHER" id="PTHR15921:SF3">
    <property type="entry name" value="PRE-MRNA CLEAVAGE COMPLEX 2 PROTEIN PCF11"/>
    <property type="match status" value="1"/>
</dbReference>
<dbReference type="PANTHER" id="PTHR15921">
    <property type="entry name" value="PRE-MRNA CLEAVAGE COMPLEX II"/>
    <property type="match status" value="1"/>
</dbReference>
<dbReference type="Pfam" id="PF04818">
    <property type="entry name" value="CID"/>
    <property type="match status" value="1"/>
</dbReference>
<dbReference type="SMART" id="SM00582">
    <property type="entry name" value="RPR"/>
    <property type="match status" value="1"/>
</dbReference>
<dbReference type="SUPFAM" id="SSF48464">
    <property type="entry name" value="ENTH/VHS domain"/>
    <property type="match status" value="1"/>
</dbReference>
<dbReference type="PROSITE" id="PS51391">
    <property type="entry name" value="CID"/>
    <property type="match status" value="1"/>
</dbReference>
<sequence>MESVESAARDYRETLAELRNNNKTQINLLTILADDFKKAAPQIVEVIERHLTTCSPSQKLLVMYVCDSILKNVKKPNDYDALFARKIVSMFEHAFRQGDERIRTSLYRIRVTWASTTLFMPSKLYELDMKINKLDPNWPISNPQTGRALRDDPQVMAPSQSRPAGNATSPAASTSTNRVFVNPKFIGSSTPGAASASKTVVEKTKSPGTVNKEKQVKKEPKQDPLDKLLPSSSASKTSSSPAGLKRKSAPSEHPNAPIRKKPQQPPKPQTAIDEDLRSISLTKKPPVPSAQDQDFRPKTLKPTSVIGSHAFAPVAAPIRPMIPVPPPVSVAPFVPAPPLSSAPPFQHPQQHHPQLPPPPVHQGMGRGYHHNSPPQDPAPIVPVQAPPPQQHLPAPENVYSSEQPKLDVPANNRIFVDGKAYEVMFVDDTAVIERGGAPHRIYFAGPPRNLVIDGIPHLLQFDTPTQIDILGSKHMVKFGAPSRELYIGGHPFKGQFGGPPIIATINGRRHEIRLTGSAPEVRIEPEPAYHLTHFLHKMREEKKIEIASEKPEKKEDWLSYLKNLRTRNILPAPARSPSSPRNQTPPPANLPIPGMNNAGQRGGYHNRHQPQQNARWGGANKQQNIPPPPSDPSPIGSGVEKRSAPPAAITDFNIRLLQIRYDSVVDALITKRADACKFCGMRLDDSQGKSKEWQDHMDWHVKQNLARHGSNNSAAVPYRQWYPSTSTWLTPRASDETNEQEADKPEEPLPGVASSGVKTKECSVCGEKFDEYYDDDEETWRLRDTVNVHGKIVHSACASDAARSLDNSSFFNDSDIKKEEPFD</sequence>
<feature type="chain" id="PRO_0000065440" description="Polyadenylation and cleavage factor homolog 11">
    <location>
        <begin position="1"/>
        <end position="823"/>
    </location>
</feature>
<feature type="domain" description="CID" evidence="1">
    <location>
        <begin position="3"/>
        <end position="135"/>
    </location>
</feature>
<feature type="region of interest" description="Disordered" evidence="2">
    <location>
        <begin position="142"/>
        <end position="176"/>
    </location>
</feature>
<feature type="region of interest" description="Disordered" evidence="2">
    <location>
        <begin position="188"/>
        <end position="301"/>
    </location>
</feature>
<feature type="region of interest" description="Disordered" evidence="2">
    <location>
        <begin position="340"/>
        <end position="395"/>
    </location>
</feature>
<feature type="region of interest" description="Disordered" evidence="2">
    <location>
        <begin position="570"/>
        <end position="643"/>
    </location>
</feature>
<feature type="region of interest" description="Disordered" evidence="2">
    <location>
        <begin position="728"/>
        <end position="755"/>
    </location>
</feature>
<feature type="compositionally biased region" description="Polar residues" evidence="2">
    <location>
        <begin position="157"/>
        <end position="176"/>
    </location>
</feature>
<feature type="compositionally biased region" description="Polar residues" evidence="2">
    <location>
        <begin position="188"/>
        <end position="198"/>
    </location>
</feature>
<feature type="compositionally biased region" description="Basic and acidic residues" evidence="2">
    <location>
        <begin position="200"/>
        <end position="226"/>
    </location>
</feature>
<feature type="compositionally biased region" description="Low complexity" evidence="2">
    <location>
        <begin position="227"/>
        <end position="242"/>
    </location>
</feature>
<feature type="compositionally biased region" description="Low complexity" evidence="2">
    <location>
        <begin position="342"/>
        <end position="353"/>
    </location>
</feature>
<feature type="compositionally biased region" description="Pro residues" evidence="2">
    <location>
        <begin position="374"/>
        <end position="390"/>
    </location>
</feature>
<feature type="compositionally biased region" description="Low complexity" evidence="2">
    <location>
        <begin position="571"/>
        <end position="581"/>
    </location>
</feature>
<feature type="compositionally biased region" description="Polar residues" evidence="2">
    <location>
        <begin position="609"/>
        <end position="624"/>
    </location>
</feature>
<keyword id="KW-1185">Reference proteome</keyword>
<protein>
    <recommendedName>
        <fullName>Polyadenylation and cleavage factor homolog 11</fullName>
    </recommendedName>
</protein>
<organism>
    <name type="scientific">Caenorhabditis elegans</name>
    <dbReference type="NCBI Taxonomy" id="6239"/>
    <lineage>
        <taxon>Eukaryota</taxon>
        <taxon>Metazoa</taxon>
        <taxon>Ecdysozoa</taxon>
        <taxon>Nematoda</taxon>
        <taxon>Chromadorea</taxon>
        <taxon>Rhabditida</taxon>
        <taxon>Rhabditina</taxon>
        <taxon>Rhabditomorpha</taxon>
        <taxon>Rhabditoidea</taxon>
        <taxon>Rhabditidae</taxon>
        <taxon>Peloderinae</taxon>
        <taxon>Caenorhabditis</taxon>
    </lineage>
</organism>
<evidence type="ECO:0000255" key="1">
    <source>
        <dbReference type="PROSITE-ProRule" id="PRU00724"/>
    </source>
</evidence>
<evidence type="ECO:0000256" key="2">
    <source>
        <dbReference type="SAM" id="MobiDB-lite"/>
    </source>
</evidence>